<protein>
    <recommendedName>
        <fullName evidence="1">Enolase</fullName>
        <ecNumber evidence="1">4.2.1.11</ecNumber>
    </recommendedName>
    <alternativeName>
        <fullName evidence="1">2-phospho-D-glycerate hydro-lyase</fullName>
    </alternativeName>
    <alternativeName>
        <fullName evidence="1">2-phosphoglycerate dehydratase</fullName>
    </alternativeName>
</protein>
<name>ENO_KLEP3</name>
<proteinExistence type="inferred from homology"/>
<dbReference type="EC" id="4.2.1.11" evidence="1"/>
<dbReference type="EMBL" id="CP000964">
    <property type="protein sequence ID" value="ACI09996.1"/>
    <property type="molecule type" value="Genomic_DNA"/>
</dbReference>
<dbReference type="SMR" id="B5XV19"/>
<dbReference type="KEGG" id="kpe:KPK_0999"/>
<dbReference type="HOGENOM" id="CLU_031223_2_1_6"/>
<dbReference type="UniPathway" id="UPA00109">
    <property type="reaction ID" value="UER00187"/>
</dbReference>
<dbReference type="Proteomes" id="UP000001734">
    <property type="component" value="Chromosome"/>
</dbReference>
<dbReference type="GO" id="GO:0009986">
    <property type="term" value="C:cell surface"/>
    <property type="evidence" value="ECO:0007669"/>
    <property type="project" value="UniProtKB-SubCell"/>
</dbReference>
<dbReference type="GO" id="GO:0005576">
    <property type="term" value="C:extracellular region"/>
    <property type="evidence" value="ECO:0007669"/>
    <property type="project" value="UniProtKB-SubCell"/>
</dbReference>
<dbReference type="GO" id="GO:0000015">
    <property type="term" value="C:phosphopyruvate hydratase complex"/>
    <property type="evidence" value="ECO:0007669"/>
    <property type="project" value="InterPro"/>
</dbReference>
<dbReference type="GO" id="GO:0000287">
    <property type="term" value="F:magnesium ion binding"/>
    <property type="evidence" value="ECO:0007669"/>
    <property type="project" value="UniProtKB-UniRule"/>
</dbReference>
<dbReference type="GO" id="GO:0004634">
    <property type="term" value="F:phosphopyruvate hydratase activity"/>
    <property type="evidence" value="ECO:0007669"/>
    <property type="project" value="UniProtKB-UniRule"/>
</dbReference>
<dbReference type="GO" id="GO:0006096">
    <property type="term" value="P:glycolytic process"/>
    <property type="evidence" value="ECO:0007669"/>
    <property type="project" value="UniProtKB-UniRule"/>
</dbReference>
<dbReference type="CDD" id="cd03313">
    <property type="entry name" value="enolase"/>
    <property type="match status" value="1"/>
</dbReference>
<dbReference type="FunFam" id="3.20.20.120:FF:000001">
    <property type="entry name" value="Enolase"/>
    <property type="match status" value="1"/>
</dbReference>
<dbReference type="FunFam" id="3.30.390.10:FF:000001">
    <property type="entry name" value="Enolase"/>
    <property type="match status" value="1"/>
</dbReference>
<dbReference type="Gene3D" id="3.20.20.120">
    <property type="entry name" value="Enolase-like C-terminal domain"/>
    <property type="match status" value="1"/>
</dbReference>
<dbReference type="Gene3D" id="3.30.390.10">
    <property type="entry name" value="Enolase-like, N-terminal domain"/>
    <property type="match status" value="1"/>
</dbReference>
<dbReference type="HAMAP" id="MF_00318">
    <property type="entry name" value="Enolase"/>
    <property type="match status" value="1"/>
</dbReference>
<dbReference type="InterPro" id="IPR000941">
    <property type="entry name" value="Enolase"/>
</dbReference>
<dbReference type="InterPro" id="IPR036849">
    <property type="entry name" value="Enolase-like_C_sf"/>
</dbReference>
<dbReference type="InterPro" id="IPR029017">
    <property type="entry name" value="Enolase-like_N"/>
</dbReference>
<dbReference type="InterPro" id="IPR020810">
    <property type="entry name" value="Enolase_C"/>
</dbReference>
<dbReference type="InterPro" id="IPR020809">
    <property type="entry name" value="Enolase_CS"/>
</dbReference>
<dbReference type="InterPro" id="IPR020811">
    <property type="entry name" value="Enolase_N"/>
</dbReference>
<dbReference type="NCBIfam" id="TIGR01060">
    <property type="entry name" value="eno"/>
    <property type="match status" value="1"/>
</dbReference>
<dbReference type="PANTHER" id="PTHR11902">
    <property type="entry name" value="ENOLASE"/>
    <property type="match status" value="1"/>
</dbReference>
<dbReference type="PANTHER" id="PTHR11902:SF1">
    <property type="entry name" value="ENOLASE"/>
    <property type="match status" value="1"/>
</dbReference>
<dbReference type="Pfam" id="PF00113">
    <property type="entry name" value="Enolase_C"/>
    <property type="match status" value="1"/>
</dbReference>
<dbReference type="Pfam" id="PF03952">
    <property type="entry name" value="Enolase_N"/>
    <property type="match status" value="1"/>
</dbReference>
<dbReference type="PIRSF" id="PIRSF001400">
    <property type="entry name" value="Enolase"/>
    <property type="match status" value="1"/>
</dbReference>
<dbReference type="PRINTS" id="PR00148">
    <property type="entry name" value="ENOLASE"/>
</dbReference>
<dbReference type="SFLD" id="SFLDF00002">
    <property type="entry name" value="enolase"/>
    <property type="match status" value="1"/>
</dbReference>
<dbReference type="SFLD" id="SFLDG00178">
    <property type="entry name" value="enolase"/>
    <property type="match status" value="1"/>
</dbReference>
<dbReference type="SMART" id="SM01192">
    <property type="entry name" value="Enolase_C"/>
    <property type="match status" value="1"/>
</dbReference>
<dbReference type="SMART" id="SM01193">
    <property type="entry name" value="Enolase_N"/>
    <property type="match status" value="1"/>
</dbReference>
<dbReference type="SUPFAM" id="SSF51604">
    <property type="entry name" value="Enolase C-terminal domain-like"/>
    <property type="match status" value="1"/>
</dbReference>
<dbReference type="SUPFAM" id="SSF54826">
    <property type="entry name" value="Enolase N-terminal domain-like"/>
    <property type="match status" value="1"/>
</dbReference>
<dbReference type="PROSITE" id="PS00164">
    <property type="entry name" value="ENOLASE"/>
    <property type="match status" value="1"/>
</dbReference>
<organism>
    <name type="scientific">Klebsiella pneumoniae (strain 342)</name>
    <dbReference type="NCBI Taxonomy" id="507522"/>
    <lineage>
        <taxon>Bacteria</taxon>
        <taxon>Pseudomonadati</taxon>
        <taxon>Pseudomonadota</taxon>
        <taxon>Gammaproteobacteria</taxon>
        <taxon>Enterobacterales</taxon>
        <taxon>Enterobacteriaceae</taxon>
        <taxon>Klebsiella/Raoultella group</taxon>
        <taxon>Klebsiella</taxon>
        <taxon>Klebsiella pneumoniae complex</taxon>
    </lineage>
</organism>
<gene>
    <name evidence="1" type="primary">eno</name>
    <name type="ordered locus">KPK_0999</name>
</gene>
<keyword id="KW-0963">Cytoplasm</keyword>
<keyword id="KW-0324">Glycolysis</keyword>
<keyword id="KW-0456">Lyase</keyword>
<keyword id="KW-0460">Magnesium</keyword>
<keyword id="KW-0479">Metal-binding</keyword>
<keyword id="KW-0964">Secreted</keyword>
<accession>B5XV19</accession>
<sequence>MSKIVKVIGREIIDSRGNPTVEAEVHLEGGFVGMAAAPSGASTGSREALELRDGDKSRFLGKGVTKAVAAVNGPIAQAILGKDAKDQAGIDKIMIDLDGTENKSNFGANAILAVSLANAKAAAASKGLPLYAHIAELNGTPGKYSMPVPMMNIINGGEHADNNVDIQEFMIQPVGAPTLKEAVRMGSEVFHHLAKVLKSKGMNTAVGDEGGYAPNLGSNAEALAVIAEAVKAAGYELGKDITLAMDCAASEFYKDGKYVLAGEGNKAFTSEEFTHFLEDLTKQYPIVSIEDGLDESDWDGFAYQTKVLGDKIQLVGDDLFVTNTKILKEGIEKGIANSILIKFNQIGSLTETLAAIKMAKDAGYTAVISHRSGETEDATIADLAVGTAAGQIKTGSMSRSDRVAKYNQLIRIEEALGEQAPFNGRKEIKGQA</sequence>
<comment type="function">
    <text evidence="1">Catalyzes the reversible conversion of 2-phosphoglycerate (2-PG) into phosphoenolpyruvate (PEP). It is essential for the degradation of carbohydrates via glycolysis.</text>
</comment>
<comment type="catalytic activity">
    <reaction evidence="1">
        <text>(2R)-2-phosphoglycerate = phosphoenolpyruvate + H2O</text>
        <dbReference type="Rhea" id="RHEA:10164"/>
        <dbReference type="ChEBI" id="CHEBI:15377"/>
        <dbReference type="ChEBI" id="CHEBI:58289"/>
        <dbReference type="ChEBI" id="CHEBI:58702"/>
        <dbReference type="EC" id="4.2.1.11"/>
    </reaction>
</comment>
<comment type="cofactor">
    <cofactor evidence="1">
        <name>Mg(2+)</name>
        <dbReference type="ChEBI" id="CHEBI:18420"/>
    </cofactor>
    <text evidence="1">Binds a second Mg(2+) ion via substrate during catalysis.</text>
</comment>
<comment type="pathway">
    <text evidence="1">Carbohydrate degradation; glycolysis; pyruvate from D-glyceraldehyde 3-phosphate: step 4/5.</text>
</comment>
<comment type="subunit">
    <text evidence="1">Component of the RNA degradosome, a multiprotein complex involved in RNA processing and mRNA degradation.</text>
</comment>
<comment type="subcellular location">
    <subcellularLocation>
        <location evidence="1">Cytoplasm</location>
    </subcellularLocation>
    <subcellularLocation>
        <location evidence="1">Secreted</location>
    </subcellularLocation>
    <subcellularLocation>
        <location evidence="1">Cell surface</location>
    </subcellularLocation>
    <text evidence="1">Fractions of enolase are present in both the cytoplasm and on the cell surface.</text>
</comment>
<comment type="similarity">
    <text evidence="1">Belongs to the enolase family.</text>
</comment>
<evidence type="ECO:0000255" key="1">
    <source>
        <dbReference type="HAMAP-Rule" id="MF_00318"/>
    </source>
</evidence>
<reference key="1">
    <citation type="journal article" date="2008" name="PLoS Genet.">
        <title>Complete genome sequence of the N2-fixing broad host range endophyte Klebsiella pneumoniae 342 and virulence predictions verified in mice.</title>
        <authorList>
            <person name="Fouts D.E."/>
            <person name="Tyler H.L."/>
            <person name="DeBoy R.T."/>
            <person name="Daugherty S."/>
            <person name="Ren Q."/>
            <person name="Badger J.H."/>
            <person name="Durkin A.S."/>
            <person name="Huot H."/>
            <person name="Shrivastava S."/>
            <person name="Kothari S."/>
            <person name="Dodson R.J."/>
            <person name="Mohamoud Y."/>
            <person name="Khouri H."/>
            <person name="Roesch L.F.W."/>
            <person name="Krogfelt K.A."/>
            <person name="Struve C."/>
            <person name="Triplett E.W."/>
            <person name="Methe B.A."/>
        </authorList>
    </citation>
    <scope>NUCLEOTIDE SEQUENCE [LARGE SCALE GENOMIC DNA]</scope>
    <source>
        <strain>342</strain>
    </source>
</reference>
<feature type="chain" id="PRO_1000115874" description="Enolase">
    <location>
        <begin position="1"/>
        <end position="432"/>
    </location>
</feature>
<feature type="active site" description="Proton donor" evidence="1">
    <location>
        <position position="209"/>
    </location>
</feature>
<feature type="active site" description="Proton acceptor" evidence="1">
    <location>
        <position position="342"/>
    </location>
</feature>
<feature type="binding site" evidence="1">
    <location>
        <position position="167"/>
    </location>
    <ligand>
        <name>(2R)-2-phosphoglycerate</name>
        <dbReference type="ChEBI" id="CHEBI:58289"/>
    </ligand>
</feature>
<feature type="binding site" evidence="1">
    <location>
        <position position="246"/>
    </location>
    <ligand>
        <name>Mg(2+)</name>
        <dbReference type="ChEBI" id="CHEBI:18420"/>
    </ligand>
</feature>
<feature type="binding site" evidence="1">
    <location>
        <position position="290"/>
    </location>
    <ligand>
        <name>Mg(2+)</name>
        <dbReference type="ChEBI" id="CHEBI:18420"/>
    </ligand>
</feature>
<feature type="binding site" evidence="1">
    <location>
        <position position="317"/>
    </location>
    <ligand>
        <name>Mg(2+)</name>
        <dbReference type="ChEBI" id="CHEBI:18420"/>
    </ligand>
</feature>
<feature type="binding site" evidence="1">
    <location>
        <position position="342"/>
    </location>
    <ligand>
        <name>(2R)-2-phosphoglycerate</name>
        <dbReference type="ChEBI" id="CHEBI:58289"/>
    </ligand>
</feature>
<feature type="binding site" evidence="1">
    <location>
        <position position="371"/>
    </location>
    <ligand>
        <name>(2R)-2-phosphoglycerate</name>
        <dbReference type="ChEBI" id="CHEBI:58289"/>
    </ligand>
</feature>
<feature type="binding site" evidence="1">
    <location>
        <position position="372"/>
    </location>
    <ligand>
        <name>(2R)-2-phosphoglycerate</name>
        <dbReference type="ChEBI" id="CHEBI:58289"/>
    </ligand>
</feature>
<feature type="binding site" evidence="1">
    <location>
        <position position="393"/>
    </location>
    <ligand>
        <name>(2R)-2-phosphoglycerate</name>
        <dbReference type="ChEBI" id="CHEBI:58289"/>
    </ligand>
</feature>